<organism>
    <name type="scientific">Gallus gallus</name>
    <name type="common">Chicken</name>
    <dbReference type="NCBI Taxonomy" id="9031"/>
    <lineage>
        <taxon>Eukaryota</taxon>
        <taxon>Metazoa</taxon>
        <taxon>Chordata</taxon>
        <taxon>Craniata</taxon>
        <taxon>Vertebrata</taxon>
        <taxon>Euteleostomi</taxon>
        <taxon>Archelosauria</taxon>
        <taxon>Archosauria</taxon>
        <taxon>Dinosauria</taxon>
        <taxon>Saurischia</taxon>
        <taxon>Theropoda</taxon>
        <taxon>Coelurosauria</taxon>
        <taxon>Aves</taxon>
        <taxon>Neognathae</taxon>
        <taxon>Galloanserae</taxon>
        <taxon>Galliformes</taxon>
        <taxon>Phasianidae</taxon>
        <taxon>Phasianinae</taxon>
        <taxon>Gallus</taxon>
    </lineage>
</organism>
<proteinExistence type="evidence at transcript level"/>
<protein>
    <recommendedName>
        <fullName>Bromodomain-containing protein 7</fullName>
    </recommendedName>
</protein>
<keyword id="KW-0103">Bromodomain</keyword>
<keyword id="KW-0131">Cell cycle</keyword>
<keyword id="KW-0158">Chromosome</keyword>
<keyword id="KW-0175">Coiled coil</keyword>
<keyword id="KW-0539">Nucleus</keyword>
<keyword id="KW-1185">Reference proteome</keyword>
<keyword id="KW-0804">Transcription</keyword>
<keyword id="KW-0805">Transcription regulation</keyword>
<keyword id="KW-0043">Tumor suppressor</keyword>
<keyword id="KW-0879">Wnt signaling pathway</keyword>
<gene>
    <name type="primary">BRD7</name>
    <name type="ORF">RCJMB04_11a18</name>
</gene>
<dbReference type="EMBL" id="AJ720122">
    <property type="protein sequence ID" value="CAG31781.1"/>
    <property type="molecule type" value="mRNA"/>
</dbReference>
<dbReference type="RefSeq" id="NP_001005839.1">
    <property type="nucleotide sequence ID" value="NM_001005839.1"/>
</dbReference>
<dbReference type="SMR" id="Q5ZKG2"/>
<dbReference type="FunCoup" id="Q5ZKG2">
    <property type="interactions" value="2658"/>
</dbReference>
<dbReference type="STRING" id="9031.ENSGALP00000005996"/>
<dbReference type="GlyGen" id="Q5ZKG2">
    <property type="glycosylation" value="1 site"/>
</dbReference>
<dbReference type="PaxDb" id="9031-ENSGALP00000005996"/>
<dbReference type="GeneID" id="415730"/>
<dbReference type="KEGG" id="gga:415730"/>
<dbReference type="CTD" id="29117"/>
<dbReference type="VEuPathDB" id="HostDB:geneid_415730"/>
<dbReference type="eggNOG" id="KOG1828">
    <property type="taxonomic scope" value="Eukaryota"/>
</dbReference>
<dbReference type="InParanoid" id="Q5ZKG2"/>
<dbReference type="OrthoDB" id="21648at2759"/>
<dbReference type="PhylomeDB" id="Q5ZKG2"/>
<dbReference type="PRO" id="PR:Q5ZKG2"/>
<dbReference type="Proteomes" id="UP000000539">
    <property type="component" value="Unassembled WGS sequence"/>
</dbReference>
<dbReference type="GO" id="GO:0005694">
    <property type="term" value="C:chromosome"/>
    <property type="evidence" value="ECO:0007669"/>
    <property type="project" value="UniProtKB-SubCell"/>
</dbReference>
<dbReference type="GO" id="GO:0005634">
    <property type="term" value="C:nucleus"/>
    <property type="evidence" value="ECO:0000250"/>
    <property type="project" value="UniProtKB"/>
</dbReference>
<dbReference type="GO" id="GO:0070577">
    <property type="term" value="F:lysine-acetylated histone binding"/>
    <property type="evidence" value="ECO:0000318"/>
    <property type="project" value="GO_Central"/>
</dbReference>
<dbReference type="GO" id="GO:0006357">
    <property type="term" value="P:regulation of transcription by RNA polymerase II"/>
    <property type="evidence" value="ECO:0000318"/>
    <property type="project" value="GO_Central"/>
</dbReference>
<dbReference type="GO" id="GO:0016055">
    <property type="term" value="P:Wnt signaling pathway"/>
    <property type="evidence" value="ECO:0007669"/>
    <property type="project" value="UniProtKB-KW"/>
</dbReference>
<dbReference type="CDD" id="cd05513">
    <property type="entry name" value="Bromo_brd7_like"/>
    <property type="match status" value="1"/>
</dbReference>
<dbReference type="FunFam" id="1.20.920.10:FF:000022">
    <property type="entry name" value="Putative bromodomain-containing protein 9"/>
    <property type="match status" value="1"/>
</dbReference>
<dbReference type="Gene3D" id="1.20.920.10">
    <property type="entry name" value="Bromodomain-like"/>
    <property type="match status" value="1"/>
</dbReference>
<dbReference type="InterPro" id="IPR001487">
    <property type="entry name" value="Bromodomain"/>
</dbReference>
<dbReference type="InterPro" id="IPR036427">
    <property type="entry name" value="Bromodomain-like_sf"/>
</dbReference>
<dbReference type="InterPro" id="IPR051831">
    <property type="entry name" value="Bromodomain_contain_prot"/>
</dbReference>
<dbReference type="InterPro" id="IPR021900">
    <property type="entry name" value="DUF3512"/>
</dbReference>
<dbReference type="PANTHER" id="PTHR22881">
    <property type="entry name" value="BROMODOMAIN CONTAINING PROTEIN"/>
    <property type="match status" value="1"/>
</dbReference>
<dbReference type="PANTHER" id="PTHR22881:SF12">
    <property type="entry name" value="BROMODOMAIN-CONTAINING PROTEIN 7"/>
    <property type="match status" value="1"/>
</dbReference>
<dbReference type="Pfam" id="PF00439">
    <property type="entry name" value="Bromodomain"/>
    <property type="match status" value="1"/>
</dbReference>
<dbReference type="Pfam" id="PF12024">
    <property type="entry name" value="DUF3512"/>
    <property type="match status" value="1"/>
</dbReference>
<dbReference type="PRINTS" id="PR00503">
    <property type="entry name" value="BROMODOMAIN"/>
</dbReference>
<dbReference type="SMART" id="SM00297">
    <property type="entry name" value="BROMO"/>
    <property type="match status" value="1"/>
</dbReference>
<dbReference type="SUPFAM" id="SSF47370">
    <property type="entry name" value="Bromodomain"/>
    <property type="match status" value="1"/>
</dbReference>
<dbReference type="PROSITE" id="PS50014">
    <property type="entry name" value="BROMODOMAIN_2"/>
    <property type="match status" value="1"/>
</dbReference>
<accession>Q5ZKG2</accession>
<comment type="function">
    <text evidence="1">Acts both as coactivator and as corepressor. May play a role in chromatin remodeling. Participates in the Wnt signaling pathway. Transcriptional corepressor that down-regulates the expression of target genes. Binds to target promoters, leading to increased histone H3 acetylation. Coactivator for TP53-mediated activation of transcription of a set of target genes. Required for TP53-mediated cell-cycle arrest in response to oncogene activation. Inhibits cell cycle progression from G1 to S phase (By similarity).</text>
</comment>
<comment type="subcellular location">
    <subcellularLocation>
        <location evidence="2">Nucleus</location>
    </subcellularLocation>
    <subcellularLocation>
        <location evidence="2">Chromosome</location>
    </subcellularLocation>
</comment>
<evidence type="ECO:0000250" key="1"/>
<evidence type="ECO:0000250" key="2">
    <source>
        <dbReference type="UniProtKB" id="Q9NPI1"/>
    </source>
</evidence>
<evidence type="ECO:0000255" key="3"/>
<evidence type="ECO:0000255" key="4">
    <source>
        <dbReference type="PROSITE-ProRule" id="PRU00035"/>
    </source>
</evidence>
<evidence type="ECO:0000256" key="5">
    <source>
        <dbReference type="SAM" id="MobiDB-lite"/>
    </source>
</evidence>
<sequence>MGKKHKKHKSDKHPYEEYVEKPLKLVLKVGGNEVAELSTGSAGLDSSLYEDKSEHEKHKDRKRKKRKKGEKQVPGEEKEKRKRKVKEDKRKRDREHPDSEGEQELRCQTPIRLELSPEKPLTSSLSKQEEVEQTPLQEALNQLMRQLQRKDPSSFFSFPVTDFIAPGYSMIIKNPMDFSTMKEKIKNNGYQSIEELKDNFKLMCTNAMTYNKPDTIYYKAAKKLLHSGMKILSQERIQSLKQSIEFMADLQKTRKQKDKVELQLSGEDESGSGKDKGEPVDGDTKAFKTPNKEHKKKDKDLLEDKLRINSLEREQEQIDRIVRESGGKLTRRLANSQCEFERRKPDGTTTLGLLNPVDLTAGEAGYCPVKLGMTAGRLQSGVNMLQGFKEDKRNKVTPVTYLNYGPYSSYAPTYDSTFANISKEDSDLIYSTYGEDSNQGSFSIHEFLMKSQDYPFLMADSLLDVLTKGGHSRSLRELETPLEEDEGPHERSDALKEIMEIDIAARLDSANNDRLTALKAVTNFGMPMEEFDSEEAEIFQRKLDETTKLLRELQDAQNERLSTKPPPNMICLLGPSYREMHLAERVTNNLKELAQQVTPGDIVSTYGIRKAMGISIPLPDIGDSGVDLTDEFQEPKKTVTITENECGPVTV</sequence>
<reference key="1">
    <citation type="journal article" date="2005" name="Genome Biol.">
        <title>Full-length cDNAs from chicken bursal lymphocytes to facilitate gene function analysis.</title>
        <authorList>
            <person name="Caldwell R.B."/>
            <person name="Kierzek A.M."/>
            <person name="Arakawa H."/>
            <person name="Bezzubov Y."/>
            <person name="Zaim J."/>
            <person name="Fiedler P."/>
            <person name="Kutter S."/>
            <person name="Blagodatski A."/>
            <person name="Kostovska D."/>
            <person name="Koter M."/>
            <person name="Plachy J."/>
            <person name="Carninci P."/>
            <person name="Hayashizaki Y."/>
            <person name="Buerstedde J.-M."/>
        </authorList>
    </citation>
    <scope>NUCLEOTIDE SEQUENCE [LARGE SCALE MRNA]</scope>
    <source>
        <strain>CB</strain>
        <tissue>Bursa of Fabricius</tissue>
    </source>
</reference>
<name>BRD7_CHICK</name>
<feature type="chain" id="PRO_0000227667" description="Bromodomain-containing protein 7">
    <location>
        <begin position="1"/>
        <end position="651"/>
    </location>
</feature>
<feature type="domain" description="Bromo" evidence="4">
    <location>
        <begin position="131"/>
        <end position="235"/>
    </location>
</feature>
<feature type="region of interest" description="Disordered" evidence="5">
    <location>
        <begin position="36"/>
        <end position="133"/>
    </location>
</feature>
<feature type="region of interest" description="Disordered" evidence="5">
    <location>
        <begin position="257"/>
        <end position="298"/>
    </location>
</feature>
<feature type="coiled-coil region" evidence="3">
    <location>
        <begin position="533"/>
        <end position="564"/>
    </location>
</feature>
<feature type="short sequence motif" description="Nuclear localization signal" evidence="1">
    <location>
        <begin position="65"/>
        <end position="96"/>
    </location>
</feature>
<feature type="compositionally biased region" description="Basic residues" evidence="5">
    <location>
        <begin position="58"/>
        <end position="69"/>
    </location>
</feature>
<feature type="compositionally biased region" description="Basic and acidic residues" evidence="5">
    <location>
        <begin position="70"/>
        <end position="105"/>
    </location>
</feature>
<feature type="compositionally biased region" description="Basic and acidic residues" evidence="5">
    <location>
        <begin position="271"/>
        <end position="298"/>
    </location>
</feature>